<keyword id="KW-0156">Chromatin regulator</keyword>
<keyword id="KW-0539">Nucleus</keyword>
<keyword id="KW-1185">Reference proteome</keyword>
<keyword id="KW-0804">Transcription</keyword>
<keyword id="KW-0805">Transcription regulation</keyword>
<proteinExistence type="evidence at transcript level"/>
<gene>
    <name evidence="1" type="primary">Msl3b</name>
    <name evidence="6" type="synonym">Msl3l2</name>
</gene>
<dbReference type="EMBL" id="AK155382">
    <property type="protein sequence ID" value="BAE33232.1"/>
    <property type="molecule type" value="mRNA"/>
</dbReference>
<dbReference type="EMBL" id="AC153521">
    <property type="status" value="NOT_ANNOTATED_CDS"/>
    <property type="molecule type" value="Genomic_DNA"/>
</dbReference>
<dbReference type="CCDS" id="CCDS48561.1"/>
<dbReference type="RefSeq" id="NP_001157305.1">
    <property type="nucleotide sequence ID" value="NM_001163833.1"/>
</dbReference>
<dbReference type="RefSeq" id="XP_006512939.1">
    <property type="nucleotide sequence ID" value="XM_006512876.3"/>
</dbReference>
<dbReference type="SMR" id="G3X992"/>
<dbReference type="FunCoup" id="G3X992">
    <property type="interactions" value="17"/>
</dbReference>
<dbReference type="STRING" id="10090.ENSMUSP00000051220"/>
<dbReference type="iPTMnet" id="G3X992"/>
<dbReference type="PhosphoSitePlus" id="G3X992"/>
<dbReference type="PaxDb" id="10090-ENSMUSP00000051220"/>
<dbReference type="PeptideAtlas" id="G3X992"/>
<dbReference type="ProteomicsDB" id="343505"/>
<dbReference type="DNASU" id="73390"/>
<dbReference type="Ensembl" id="ENSMUST00000063138.8">
    <property type="protein sequence ID" value="ENSMUSP00000051220.8"/>
    <property type="gene ID" value="ENSMUSG00000047669.9"/>
</dbReference>
<dbReference type="GeneID" id="73390"/>
<dbReference type="KEGG" id="mmu:73390"/>
<dbReference type="UCSC" id="uc007fcb.1">
    <property type="organism name" value="mouse"/>
</dbReference>
<dbReference type="AGR" id="MGI:1920640"/>
<dbReference type="CTD" id="73390"/>
<dbReference type="MGI" id="MGI:1920640">
    <property type="gene designation" value="Msl3l2"/>
</dbReference>
<dbReference type="VEuPathDB" id="HostDB:ENSMUSG00000047669"/>
<dbReference type="eggNOG" id="KOG3001">
    <property type="taxonomic scope" value="Eukaryota"/>
</dbReference>
<dbReference type="GeneTree" id="ENSGT00950000182965"/>
<dbReference type="HOGENOM" id="CLU_039566_5_2_1"/>
<dbReference type="InParanoid" id="G3X992"/>
<dbReference type="OMA" id="CYNINRR"/>
<dbReference type="OrthoDB" id="10044771at2759"/>
<dbReference type="PhylomeDB" id="G3X992"/>
<dbReference type="TreeFam" id="TF323400"/>
<dbReference type="BioGRID-ORCS" id="73390">
    <property type="hits" value="3 hits in 76 CRISPR screens"/>
</dbReference>
<dbReference type="ChiTaRS" id="Msl3l2">
    <property type="organism name" value="mouse"/>
</dbReference>
<dbReference type="Proteomes" id="UP000000589">
    <property type="component" value="Chromosome 10"/>
</dbReference>
<dbReference type="RNAct" id="G3X992">
    <property type="molecule type" value="protein"/>
</dbReference>
<dbReference type="Bgee" id="ENSMUSG00000047669">
    <property type="expression patterns" value="Expressed in seminiferous tubule of testis and 178 other cell types or tissues"/>
</dbReference>
<dbReference type="GO" id="GO:0005634">
    <property type="term" value="C:nucleus"/>
    <property type="evidence" value="ECO:0007669"/>
    <property type="project" value="UniProtKB-SubCell"/>
</dbReference>
<dbReference type="GO" id="GO:0006325">
    <property type="term" value="P:chromatin organization"/>
    <property type="evidence" value="ECO:0007669"/>
    <property type="project" value="UniProtKB-KW"/>
</dbReference>
<dbReference type="GO" id="GO:0006355">
    <property type="term" value="P:regulation of DNA-templated transcription"/>
    <property type="evidence" value="ECO:0007669"/>
    <property type="project" value="InterPro"/>
</dbReference>
<dbReference type="FunFam" id="1.10.274.30:FF:000002">
    <property type="entry name" value="male-specific lethal 3 homolog"/>
    <property type="match status" value="1"/>
</dbReference>
<dbReference type="Gene3D" id="1.10.274.30">
    <property type="entry name" value="MRG domain"/>
    <property type="match status" value="2"/>
</dbReference>
<dbReference type="InterPro" id="IPR008676">
    <property type="entry name" value="MRG"/>
</dbReference>
<dbReference type="InterPro" id="IPR038217">
    <property type="entry name" value="MRG_C_sf"/>
</dbReference>
<dbReference type="InterPro" id="IPR026541">
    <property type="entry name" value="MRG_dom"/>
</dbReference>
<dbReference type="PANTHER" id="PTHR10880">
    <property type="entry name" value="MORTALITY FACTOR 4-LIKE PROTEIN"/>
    <property type="match status" value="1"/>
</dbReference>
<dbReference type="PANTHER" id="PTHR10880:SF46">
    <property type="entry name" value="MSL3 LIKE 2"/>
    <property type="match status" value="1"/>
</dbReference>
<dbReference type="Pfam" id="PF05712">
    <property type="entry name" value="MRG"/>
    <property type="match status" value="1"/>
</dbReference>
<dbReference type="PROSITE" id="PS51640">
    <property type="entry name" value="MRG"/>
    <property type="match status" value="1"/>
</dbReference>
<comment type="function">
    <text evidence="2">Probable non-catalytic component of the MSL histone acetyltransferase complex, a multiprotein complex that mediates the majority of histone H4 acetylation at 'Lys-16' (H4K16ac), an epigenetic mark that prevents chromatin compaction.</text>
</comment>
<comment type="subcellular location">
    <subcellularLocation>
        <location evidence="3">Nucleus</location>
    </subcellularLocation>
</comment>
<accession>G3X992</accession>
<accession>Q3U2B0</accession>
<reference key="1">
    <citation type="journal article" date="2005" name="Science">
        <title>The transcriptional landscape of the mammalian genome.</title>
        <authorList>
            <person name="Carninci P."/>
            <person name="Kasukawa T."/>
            <person name="Katayama S."/>
            <person name="Gough J."/>
            <person name="Frith M.C."/>
            <person name="Maeda N."/>
            <person name="Oyama R."/>
            <person name="Ravasi T."/>
            <person name="Lenhard B."/>
            <person name="Wells C."/>
            <person name="Kodzius R."/>
            <person name="Shimokawa K."/>
            <person name="Bajic V.B."/>
            <person name="Brenner S.E."/>
            <person name="Batalov S."/>
            <person name="Forrest A.R."/>
            <person name="Zavolan M."/>
            <person name="Davis M.J."/>
            <person name="Wilming L.G."/>
            <person name="Aidinis V."/>
            <person name="Allen J.E."/>
            <person name="Ambesi-Impiombato A."/>
            <person name="Apweiler R."/>
            <person name="Aturaliya R.N."/>
            <person name="Bailey T.L."/>
            <person name="Bansal M."/>
            <person name="Baxter L."/>
            <person name="Beisel K.W."/>
            <person name="Bersano T."/>
            <person name="Bono H."/>
            <person name="Chalk A.M."/>
            <person name="Chiu K.P."/>
            <person name="Choudhary V."/>
            <person name="Christoffels A."/>
            <person name="Clutterbuck D.R."/>
            <person name="Crowe M.L."/>
            <person name="Dalla E."/>
            <person name="Dalrymple B.P."/>
            <person name="de Bono B."/>
            <person name="Della Gatta G."/>
            <person name="di Bernardo D."/>
            <person name="Down T."/>
            <person name="Engstrom P."/>
            <person name="Fagiolini M."/>
            <person name="Faulkner G."/>
            <person name="Fletcher C.F."/>
            <person name="Fukushima T."/>
            <person name="Furuno M."/>
            <person name="Futaki S."/>
            <person name="Gariboldi M."/>
            <person name="Georgii-Hemming P."/>
            <person name="Gingeras T.R."/>
            <person name="Gojobori T."/>
            <person name="Green R.E."/>
            <person name="Gustincich S."/>
            <person name="Harbers M."/>
            <person name="Hayashi Y."/>
            <person name="Hensch T.K."/>
            <person name="Hirokawa N."/>
            <person name="Hill D."/>
            <person name="Huminiecki L."/>
            <person name="Iacono M."/>
            <person name="Ikeo K."/>
            <person name="Iwama A."/>
            <person name="Ishikawa T."/>
            <person name="Jakt M."/>
            <person name="Kanapin A."/>
            <person name="Katoh M."/>
            <person name="Kawasawa Y."/>
            <person name="Kelso J."/>
            <person name="Kitamura H."/>
            <person name="Kitano H."/>
            <person name="Kollias G."/>
            <person name="Krishnan S.P."/>
            <person name="Kruger A."/>
            <person name="Kummerfeld S.K."/>
            <person name="Kurochkin I.V."/>
            <person name="Lareau L.F."/>
            <person name="Lazarevic D."/>
            <person name="Lipovich L."/>
            <person name="Liu J."/>
            <person name="Liuni S."/>
            <person name="McWilliam S."/>
            <person name="Madan Babu M."/>
            <person name="Madera M."/>
            <person name="Marchionni L."/>
            <person name="Matsuda H."/>
            <person name="Matsuzawa S."/>
            <person name="Miki H."/>
            <person name="Mignone F."/>
            <person name="Miyake S."/>
            <person name="Morris K."/>
            <person name="Mottagui-Tabar S."/>
            <person name="Mulder N."/>
            <person name="Nakano N."/>
            <person name="Nakauchi H."/>
            <person name="Ng P."/>
            <person name="Nilsson R."/>
            <person name="Nishiguchi S."/>
            <person name="Nishikawa S."/>
            <person name="Nori F."/>
            <person name="Ohara O."/>
            <person name="Okazaki Y."/>
            <person name="Orlando V."/>
            <person name="Pang K.C."/>
            <person name="Pavan W.J."/>
            <person name="Pavesi G."/>
            <person name="Pesole G."/>
            <person name="Petrovsky N."/>
            <person name="Piazza S."/>
            <person name="Reed J."/>
            <person name="Reid J.F."/>
            <person name="Ring B.Z."/>
            <person name="Ringwald M."/>
            <person name="Rost B."/>
            <person name="Ruan Y."/>
            <person name="Salzberg S.L."/>
            <person name="Sandelin A."/>
            <person name="Schneider C."/>
            <person name="Schoenbach C."/>
            <person name="Sekiguchi K."/>
            <person name="Semple C.A."/>
            <person name="Seno S."/>
            <person name="Sessa L."/>
            <person name="Sheng Y."/>
            <person name="Shibata Y."/>
            <person name="Shimada H."/>
            <person name="Shimada K."/>
            <person name="Silva D."/>
            <person name="Sinclair B."/>
            <person name="Sperling S."/>
            <person name="Stupka E."/>
            <person name="Sugiura K."/>
            <person name="Sultana R."/>
            <person name="Takenaka Y."/>
            <person name="Taki K."/>
            <person name="Tammoja K."/>
            <person name="Tan S.L."/>
            <person name="Tang S."/>
            <person name="Taylor M.S."/>
            <person name="Tegner J."/>
            <person name="Teichmann S.A."/>
            <person name="Ueda H.R."/>
            <person name="van Nimwegen E."/>
            <person name="Verardo R."/>
            <person name="Wei C.L."/>
            <person name="Yagi K."/>
            <person name="Yamanishi H."/>
            <person name="Zabarovsky E."/>
            <person name="Zhu S."/>
            <person name="Zimmer A."/>
            <person name="Hide W."/>
            <person name="Bult C."/>
            <person name="Grimmond S.M."/>
            <person name="Teasdale R.D."/>
            <person name="Liu E.T."/>
            <person name="Brusic V."/>
            <person name="Quackenbush J."/>
            <person name="Wahlestedt C."/>
            <person name="Mattick J.S."/>
            <person name="Hume D.A."/>
            <person name="Kai C."/>
            <person name="Sasaki D."/>
            <person name="Tomaru Y."/>
            <person name="Fukuda S."/>
            <person name="Kanamori-Katayama M."/>
            <person name="Suzuki M."/>
            <person name="Aoki J."/>
            <person name="Arakawa T."/>
            <person name="Iida J."/>
            <person name="Imamura K."/>
            <person name="Itoh M."/>
            <person name="Kato T."/>
            <person name="Kawaji H."/>
            <person name="Kawagashira N."/>
            <person name="Kawashima T."/>
            <person name="Kojima M."/>
            <person name="Kondo S."/>
            <person name="Konno H."/>
            <person name="Nakano K."/>
            <person name="Ninomiya N."/>
            <person name="Nishio T."/>
            <person name="Okada M."/>
            <person name="Plessy C."/>
            <person name="Shibata K."/>
            <person name="Shiraki T."/>
            <person name="Suzuki S."/>
            <person name="Tagami M."/>
            <person name="Waki K."/>
            <person name="Watahiki A."/>
            <person name="Okamura-Oho Y."/>
            <person name="Suzuki H."/>
            <person name="Kawai J."/>
            <person name="Hayashizaki Y."/>
        </authorList>
    </citation>
    <scope>NUCLEOTIDE SEQUENCE [LARGE SCALE MRNA]</scope>
    <source>
        <strain>NOD</strain>
    </source>
</reference>
<reference key="2">
    <citation type="journal article" date="2009" name="PLoS Biol.">
        <title>Lineage-specific biology revealed by a finished genome assembly of the mouse.</title>
        <authorList>
            <person name="Church D.M."/>
            <person name="Goodstadt L."/>
            <person name="Hillier L.W."/>
            <person name="Zody M.C."/>
            <person name="Goldstein S."/>
            <person name="She X."/>
            <person name="Bult C.J."/>
            <person name="Agarwala R."/>
            <person name="Cherry J.L."/>
            <person name="DiCuccio M."/>
            <person name="Hlavina W."/>
            <person name="Kapustin Y."/>
            <person name="Meric P."/>
            <person name="Maglott D."/>
            <person name="Birtle Z."/>
            <person name="Marques A.C."/>
            <person name="Graves T."/>
            <person name="Zhou S."/>
            <person name="Teague B."/>
            <person name="Potamousis K."/>
            <person name="Churas C."/>
            <person name="Place M."/>
            <person name="Herschleb J."/>
            <person name="Runnheim R."/>
            <person name="Forrest D."/>
            <person name="Amos-Landgraf J."/>
            <person name="Schwartz D.C."/>
            <person name="Cheng Z."/>
            <person name="Lindblad-Toh K."/>
            <person name="Eichler E.E."/>
            <person name="Ponting C.P."/>
        </authorList>
    </citation>
    <scope>NUCLEOTIDE SEQUENCE [LARGE SCALE GENOMIC DNA]</scope>
    <source>
        <strain>C57BL/6J</strain>
    </source>
</reference>
<organism>
    <name type="scientific">Mus musculus</name>
    <name type="common">Mouse</name>
    <dbReference type="NCBI Taxonomy" id="10090"/>
    <lineage>
        <taxon>Eukaryota</taxon>
        <taxon>Metazoa</taxon>
        <taxon>Chordata</taxon>
        <taxon>Craniata</taxon>
        <taxon>Vertebrata</taxon>
        <taxon>Euteleostomi</taxon>
        <taxon>Mammalia</taxon>
        <taxon>Eutheria</taxon>
        <taxon>Euarchontoglires</taxon>
        <taxon>Glires</taxon>
        <taxon>Rodentia</taxon>
        <taxon>Myomorpha</taxon>
        <taxon>Muroidea</taxon>
        <taxon>Muridae</taxon>
        <taxon>Murinae</taxon>
        <taxon>Mus</taxon>
        <taxon>Mus</taxon>
    </lineage>
</organism>
<protein>
    <recommendedName>
        <fullName evidence="1">MSL complex subunit 3B</fullName>
    </recommendedName>
    <alternativeName>
        <fullName>MSL3 like 2</fullName>
    </alternativeName>
    <alternativeName>
        <fullName>Male-specific lethal-3 homolog 2</fullName>
    </alternativeName>
    <alternativeName>
        <fullName>Male-specific lethal-3 protein-like 2</fullName>
        <shortName>MSL3-like 2</shortName>
    </alternativeName>
</protein>
<sequence length="371" mass="41400">MATLGCAPKDDGEGKDEGGSDRGDGDSKPKGKKEVEPHTRREADERAMRIPIPEVLQQRLADDCYYINRRRRLVRLPCQTNVGAILECYVRHFSASVLALGDRRPQPQRAAPERSVGLCREMADGLRITFDHALPLVLLYPQEQAQYEMVTSSTFFFPTEERASDAGRSQEAPWPGPSPPQPSESQAVAGPAAPKRRRAEAEATRAPRRSTRHSTHCHWQAEDRASPQAKRSVPKLFPHLQKTPVHSAAPSPIALTPGKEGSAMFAGFEGTTEEINEILSWKLVPDNYPPGHQPPPPSYIYGAQHLLRLFVKLPEILGKMSFSEKNLKALLKHLDLFLRFLAEYQADFFLESAYVSACEAHYSSKNPRTLC</sequence>
<name>MS3L2_MOUSE</name>
<evidence type="ECO:0000250" key="1">
    <source>
        <dbReference type="UniProtKB" id="P0C860"/>
    </source>
</evidence>
<evidence type="ECO:0000250" key="2">
    <source>
        <dbReference type="UniProtKB" id="Q8N5Y2"/>
    </source>
</evidence>
<evidence type="ECO:0000255" key="3">
    <source>
        <dbReference type="PROSITE-ProRule" id="PRU00972"/>
    </source>
</evidence>
<evidence type="ECO:0000256" key="4">
    <source>
        <dbReference type="SAM" id="MobiDB-lite"/>
    </source>
</evidence>
<evidence type="ECO:0000305" key="5"/>
<evidence type="ECO:0000312" key="6">
    <source>
        <dbReference type="MGI" id="MGI:1920640"/>
    </source>
</evidence>
<feature type="chain" id="PRO_0000460406" description="MSL complex subunit 3B">
    <location>
        <begin position="1"/>
        <end position="371"/>
    </location>
</feature>
<feature type="domain" description="MRG" evidence="3">
    <location>
        <begin position="44"/>
        <end position="367"/>
    </location>
</feature>
<feature type="region of interest" description="Disordered" evidence="4">
    <location>
        <begin position="1"/>
        <end position="47"/>
    </location>
</feature>
<feature type="region of interest" description="Disordered" evidence="4">
    <location>
        <begin position="160"/>
        <end position="230"/>
    </location>
</feature>
<feature type="compositionally biased region" description="Basic and acidic residues" evidence="4">
    <location>
        <begin position="8"/>
        <end position="47"/>
    </location>
</feature>
<feature type="compositionally biased region" description="Low complexity" evidence="4">
    <location>
        <begin position="183"/>
        <end position="193"/>
    </location>
</feature>
<feature type="compositionally biased region" description="Basic residues" evidence="4">
    <location>
        <begin position="206"/>
        <end position="216"/>
    </location>
</feature>
<feature type="sequence conflict" description="In Ref. 1; BAE33232." evidence="5" ref="1">
    <original>M</original>
    <variation>V</variation>
    <location>
        <position position="48"/>
    </location>
</feature>